<dbReference type="EC" id="5.3.1.1"/>
<dbReference type="EMBL" id="J01366">
    <property type="protein sequence ID" value="AAA88757.1"/>
    <property type="molecule type" value="Genomic_DNA"/>
</dbReference>
<dbReference type="EMBL" id="Z49209">
    <property type="protein sequence ID" value="CAA89080.1"/>
    <property type="molecule type" value="Genomic_DNA"/>
</dbReference>
<dbReference type="EMBL" id="AY557654">
    <property type="protein sequence ID" value="AAS55980.1"/>
    <property type="molecule type" value="Genomic_DNA"/>
</dbReference>
<dbReference type="EMBL" id="BK006938">
    <property type="protein sequence ID" value="DAA11897.1"/>
    <property type="molecule type" value="Genomic_DNA"/>
</dbReference>
<dbReference type="PIR" id="A01168">
    <property type="entry name" value="ISBYT"/>
</dbReference>
<dbReference type="RefSeq" id="NP_010335.1">
    <property type="nucleotide sequence ID" value="NM_001180358.1"/>
</dbReference>
<dbReference type="PDB" id="1I45">
    <property type="method" value="X-ray"/>
    <property type="resolution" value="1.80 A"/>
    <property type="chains" value="A/B=2-248"/>
</dbReference>
<dbReference type="PDB" id="1NEY">
    <property type="method" value="X-ray"/>
    <property type="resolution" value="1.20 A"/>
    <property type="chains" value="A/B=2-248"/>
</dbReference>
<dbReference type="PDB" id="1NF0">
    <property type="method" value="X-ray"/>
    <property type="resolution" value="1.60 A"/>
    <property type="chains" value="A/B=2-248"/>
</dbReference>
<dbReference type="PDB" id="1YPI">
    <property type="method" value="X-ray"/>
    <property type="resolution" value="1.90 A"/>
    <property type="chains" value="A/B=2-248"/>
</dbReference>
<dbReference type="PDB" id="2YPI">
    <property type="method" value="X-ray"/>
    <property type="resolution" value="2.50 A"/>
    <property type="chains" value="A/B=2-248"/>
</dbReference>
<dbReference type="PDB" id="3YPI">
    <property type="method" value="X-ray"/>
    <property type="resolution" value="2.80 A"/>
    <property type="chains" value="A/B=2-248"/>
</dbReference>
<dbReference type="PDB" id="4FF7">
    <property type="method" value="X-ray"/>
    <property type="resolution" value="1.86 A"/>
    <property type="chains" value="A/B=1-248"/>
</dbReference>
<dbReference type="PDB" id="7TIM">
    <property type="method" value="X-ray"/>
    <property type="resolution" value="1.90 A"/>
    <property type="chains" value="A/B=2-248"/>
</dbReference>
<dbReference type="PDBsum" id="1I45"/>
<dbReference type="PDBsum" id="1NEY"/>
<dbReference type="PDBsum" id="1NF0"/>
<dbReference type="PDBsum" id="1YPI"/>
<dbReference type="PDBsum" id="2YPI"/>
<dbReference type="PDBsum" id="3YPI"/>
<dbReference type="PDBsum" id="4FF7"/>
<dbReference type="PDBsum" id="7TIM"/>
<dbReference type="BMRB" id="P00942"/>
<dbReference type="PCDDB" id="P00942"/>
<dbReference type="SMR" id="P00942"/>
<dbReference type="BioGRID" id="32104">
    <property type="interactions" value="228"/>
</dbReference>
<dbReference type="DIP" id="DIP-6671N"/>
<dbReference type="FunCoup" id="P00942">
    <property type="interactions" value="920"/>
</dbReference>
<dbReference type="IntAct" id="P00942">
    <property type="interactions" value="71"/>
</dbReference>
<dbReference type="MINT" id="P00942"/>
<dbReference type="STRING" id="4932.YDR050C"/>
<dbReference type="iPTMnet" id="P00942"/>
<dbReference type="PaxDb" id="4932-YDR050C"/>
<dbReference type="PeptideAtlas" id="P00942"/>
<dbReference type="TopDownProteomics" id="P00942"/>
<dbReference type="EnsemblFungi" id="YDR050C_mRNA">
    <property type="protein sequence ID" value="YDR050C"/>
    <property type="gene ID" value="YDR050C"/>
</dbReference>
<dbReference type="GeneID" id="851620"/>
<dbReference type="KEGG" id="sce:YDR050C"/>
<dbReference type="AGR" id="SGD:S000002457"/>
<dbReference type="SGD" id="S000002457">
    <property type="gene designation" value="TPI1"/>
</dbReference>
<dbReference type="VEuPathDB" id="FungiDB:YDR050C"/>
<dbReference type="eggNOG" id="KOG1643">
    <property type="taxonomic scope" value="Eukaryota"/>
</dbReference>
<dbReference type="GeneTree" id="ENSGT00390000013354"/>
<dbReference type="HOGENOM" id="CLU_024251_2_0_1"/>
<dbReference type="InParanoid" id="P00942"/>
<dbReference type="OMA" id="NWKMHMT"/>
<dbReference type="OrthoDB" id="6715177at2759"/>
<dbReference type="BioCyc" id="YEAST:YDR050C-MONOMER"/>
<dbReference type="BRENDA" id="5.3.1.1">
    <property type="organism ID" value="984"/>
</dbReference>
<dbReference type="Reactome" id="R-SCE-70171">
    <property type="pathway name" value="Glycolysis"/>
</dbReference>
<dbReference type="Reactome" id="R-SCE-70263">
    <property type="pathway name" value="Gluconeogenesis"/>
</dbReference>
<dbReference type="SABIO-RK" id="P00942"/>
<dbReference type="UniPathway" id="UPA00109">
    <property type="reaction ID" value="UER00189"/>
</dbReference>
<dbReference type="UniPathway" id="UPA00138"/>
<dbReference type="BioGRID-ORCS" id="851620">
    <property type="hits" value="0 hits in 10 CRISPR screens"/>
</dbReference>
<dbReference type="CD-CODE" id="E03F929F">
    <property type="entry name" value="Stress granule"/>
</dbReference>
<dbReference type="EvolutionaryTrace" id="P00942"/>
<dbReference type="PRO" id="PR:P00942"/>
<dbReference type="Proteomes" id="UP000002311">
    <property type="component" value="Chromosome IV"/>
</dbReference>
<dbReference type="RNAct" id="P00942">
    <property type="molecule type" value="protein"/>
</dbReference>
<dbReference type="GO" id="GO:0005737">
    <property type="term" value="C:cytoplasm"/>
    <property type="evidence" value="ECO:0000314"/>
    <property type="project" value="SGD"/>
</dbReference>
<dbReference type="GO" id="GO:0005829">
    <property type="term" value="C:cytosol"/>
    <property type="evidence" value="ECO:0000318"/>
    <property type="project" value="GO_Central"/>
</dbReference>
<dbReference type="GO" id="GO:0005739">
    <property type="term" value="C:mitochondrion"/>
    <property type="evidence" value="ECO:0000314"/>
    <property type="project" value="SGD"/>
</dbReference>
<dbReference type="GO" id="GO:0005886">
    <property type="term" value="C:plasma membrane"/>
    <property type="evidence" value="ECO:0007005"/>
    <property type="project" value="SGD"/>
</dbReference>
<dbReference type="GO" id="GO:0004807">
    <property type="term" value="F:triose-phosphate isomerase activity"/>
    <property type="evidence" value="ECO:0000314"/>
    <property type="project" value="SGD"/>
</dbReference>
<dbReference type="GO" id="GO:0006094">
    <property type="term" value="P:gluconeogenesis"/>
    <property type="evidence" value="ECO:0000318"/>
    <property type="project" value="GO_Central"/>
</dbReference>
<dbReference type="GO" id="GO:0046166">
    <property type="term" value="P:glyceraldehyde-3-phosphate biosynthetic process"/>
    <property type="evidence" value="ECO:0000318"/>
    <property type="project" value="GO_Central"/>
</dbReference>
<dbReference type="GO" id="GO:0019563">
    <property type="term" value="P:glycerol catabolic process"/>
    <property type="evidence" value="ECO:0000318"/>
    <property type="project" value="GO_Central"/>
</dbReference>
<dbReference type="GO" id="GO:0006096">
    <property type="term" value="P:glycolytic process"/>
    <property type="evidence" value="ECO:0000315"/>
    <property type="project" value="SGD"/>
</dbReference>
<dbReference type="CDD" id="cd00311">
    <property type="entry name" value="TIM"/>
    <property type="match status" value="1"/>
</dbReference>
<dbReference type="FunFam" id="3.20.20.70:FF:000025">
    <property type="entry name" value="Triosephosphate isomerase"/>
    <property type="match status" value="1"/>
</dbReference>
<dbReference type="Gene3D" id="3.20.20.70">
    <property type="entry name" value="Aldolase class I"/>
    <property type="match status" value="1"/>
</dbReference>
<dbReference type="HAMAP" id="MF_00147_B">
    <property type="entry name" value="TIM_B"/>
    <property type="match status" value="1"/>
</dbReference>
<dbReference type="InterPro" id="IPR013785">
    <property type="entry name" value="Aldolase_TIM"/>
</dbReference>
<dbReference type="InterPro" id="IPR035990">
    <property type="entry name" value="TIM_sf"/>
</dbReference>
<dbReference type="InterPro" id="IPR022896">
    <property type="entry name" value="TrioseP_Isoase_bac/euk"/>
</dbReference>
<dbReference type="InterPro" id="IPR000652">
    <property type="entry name" value="Triosephosphate_isomerase"/>
</dbReference>
<dbReference type="InterPro" id="IPR020861">
    <property type="entry name" value="Triosephosphate_isomerase_AS"/>
</dbReference>
<dbReference type="NCBIfam" id="TIGR00419">
    <property type="entry name" value="tim"/>
    <property type="match status" value="1"/>
</dbReference>
<dbReference type="PANTHER" id="PTHR21139">
    <property type="entry name" value="TRIOSEPHOSPHATE ISOMERASE"/>
    <property type="match status" value="1"/>
</dbReference>
<dbReference type="PANTHER" id="PTHR21139:SF41">
    <property type="entry name" value="TRIOSEPHOSPHATE ISOMERASE"/>
    <property type="match status" value="1"/>
</dbReference>
<dbReference type="Pfam" id="PF00121">
    <property type="entry name" value="TIM"/>
    <property type="match status" value="1"/>
</dbReference>
<dbReference type="SUPFAM" id="SSF51351">
    <property type="entry name" value="Triosephosphate isomerase (TIM)"/>
    <property type="match status" value="1"/>
</dbReference>
<dbReference type="PROSITE" id="PS00171">
    <property type="entry name" value="TIM_1"/>
    <property type="match status" value="1"/>
</dbReference>
<dbReference type="PROSITE" id="PS51440">
    <property type="entry name" value="TIM_2"/>
    <property type="match status" value="1"/>
</dbReference>
<organism>
    <name type="scientific">Saccharomyces cerevisiae (strain ATCC 204508 / S288c)</name>
    <name type="common">Baker's yeast</name>
    <dbReference type="NCBI Taxonomy" id="559292"/>
    <lineage>
        <taxon>Eukaryota</taxon>
        <taxon>Fungi</taxon>
        <taxon>Dikarya</taxon>
        <taxon>Ascomycota</taxon>
        <taxon>Saccharomycotina</taxon>
        <taxon>Saccharomycetes</taxon>
        <taxon>Saccharomycetales</taxon>
        <taxon>Saccharomycetaceae</taxon>
        <taxon>Saccharomyces</taxon>
    </lineage>
</organism>
<proteinExistence type="evidence at protein level"/>
<feature type="initiator methionine" description="Removed" evidence="3">
    <location>
        <position position="1"/>
    </location>
</feature>
<feature type="chain" id="PRO_0000090169" description="Triosephosphate isomerase">
    <location>
        <begin position="2"/>
        <end position="248"/>
    </location>
</feature>
<feature type="active site" description="Electrophile">
    <location>
        <position position="95"/>
    </location>
</feature>
<feature type="active site" description="Proton acceptor">
    <location>
        <position position="165"/>
    </location>
</feature>
<feature type="binding site" evidence="1">
    <location>
        <position position="10"/>
    </location>
    <ligand>
        <name>substrate</name>
    </ligand>
</feature>
<feature type="binding site" evidence="1">
    <location>
        <position position="12"/>
    </location>
    <ligand>
        <name>substrate</name>
    </ligand>
</feature>
<feature type="modified residue" description="Phosphothreonine" evidence="6">
    <location>
        <position position="4"/>
    </location>
</feature>
<feature type="modified residue" description="Phosphoserine" evidence="5 6">
    <location>
        <position position="71"/>
    </location>
</feature>
<feature type="modified residue" description="Phosphoserine" evidence="5 6">
    <location>
        <position position="215"/>
    </location>
</feature>
<feature type="cross-link" description="Glycyl lysine isopeptide (Lys-Gly) (interchain with G-Cter in ubiquitin)" evidence="7">
    <location>
        <position position="223"/>
    </location>
</feature>
<feature type="strand" evidence="8">
    <location>
        <begin position="5"/>
        <end position="10"/>
    </location>
</feature>
<feature type="helix" evidence="8">
    <location>
        <begin position="17"/>
        <end position="29"/>
    </location>
</feature>
<feature type="strand" evidence="8">
    <location>
        <begin position="36"/>
        <end position="41"/>
    </location>
</feature>
<feature type="helix" evidence="8">
    <location>
        <begin position="44"/>
        <end position="46"/>
    </location>
</feature>
<feature type="helix" evidence="8">
    <location>
        <begin position="47"/>
        <end position="53"/>
    </location>
</feature>
<feature type="strand" evidence="8">
    <location>
        <begin position="59"/>
        <end position="64"/>
    </location>
</feature>
<feature type="strand" evidence="8">
    <location>
        <begin position="68"/>
        <end position="73"/>
    </location>
</feature>
<feature type="helix" evidence="8">
    <location>
        <begin position="80"/>
        <end position="85"/>
    </location>
</feature>
<feature type="strand" evidence="8">
    <location>
        <begin position="90"/>
        <end position="94"/>
    </location>
</feature>
<feature type="helix" evidence="8">
    <location>
        <begin position="96"/>
        <end position="100"/>
    </location>
</feature>
<feature type="helix" evidence="8">
    <location>
        <begin position="106"/>
        <end position="118"/>
    </location>
</feature>
<feature type="strand" evidence="8">
    <location>
        <begin position="122"/>
        <end position="127"/>
    </location>
</feature>
<feature type="helix" evidence="8">
    <location>
        <begin position="131"/>
        <end position="135"/>
    </location>
</feature>
<feature type="helix" evidence="8">
    <location>
        <begin position="139"/>
        <end position="153"/>
    </location>
</feature>
<feature type="strand" evidence="8">
    <location>
        <begin position="160"/>
        <end position="164"/>
    </location>
</feature>
<feature type="helix" evidence="9">
    <location>
        <begin position="167"/>
        <end position="169"/>
    </location>
</feature>
<feature type="turn" evidence="8">
    <location>
        <begin position="170"/>
        <end position="172"/>
    </location>
</feature>
<feature type="helix" evidence="8">
    <location>
        <begin position="178"/>
        <end position="196"/>
    </location>
</feature>
<feature type="helix" evidence="8">
    <location>
        <begin position="198"/>
        <end position="203"/>
    </location>
</feature>
<feature type="strand" evidence="8">
    <location>
        <begin position="206"/>
        <end position="211"/>
    </location>
</feature>
<feature type="turn" evidence="8">
    <location>
        <begin position="214"/>
        <end position="216"/>
    </location>
</feature>
<feature type="helix" evidence="8">
    <location>
        <begin position="217"/>
        <end position="220"/>
    </location>
</feature>
<feature type="strand" evidence="8">
    <location>
        <begin position="228"/>
        <end position="232"/>
    </location>
</feature>
<feature type="helix" evidence="8">
    <location>
        <begin position="233"/>
        <end position="236"/>
    </location>
</feature>
<feature type="helix" evidence="8">
    <location>
        <begin position="239"/>
        <end position="244"/>
    </location>
</feature>
<feature type="turn" evidence="8">
    <location>
        <begin position="245"/>
        <end position="247"/>
    </location>
</feature>
<accession>P00942</accession>
<accession>D6VS37</accession>
<keyword id="KW-0002">3D-structure</keyword>
<keyword id="KW-0903">Direct protein sequencing</keyword>
<keyword id="KW-0312">Gluconeogenesis</keyword>
<keyword id="KW-0324">Glycolysis</keyword>
<keyword id="KW-0413">Isomerase</keyword>
<keyword id="KW-1017">Isopeptide bond</keyword>
<keyword id="KW-0597">Phosphoprotein</keyword>
<keyword id="KW-1185">Reference proteome</keyword>
<keyword id="KW-0832">Ubl conjugation</keyword>
<reference key="1">
    <citation type="journal article" date="1982" name="J. Mol. Appl. Genet.">
        <title>Nucleotide sequence of the triose phosphate isomerase gene of Saccharomyces cerevisiae.</title>
        <authorList>
            <person name="Alber T."/>
            <person name="Kawasaki G."/>
        </authorList>
    </citation>
    <scope>NUCLEOTIDE SEQUENCE [GENOMIC DNA]</scope>
</reference>
<reference key="2">
    <citation type="journal article" date="1997" name="Nature">
        <title>The nucleotide sequence of Saccharomyces cerevisiae chromosome IV.</title>
        <authorList>
            <person name="Jacq C."/>
            <person name="Alt-Moerbe J."/>
            <person name="Andre B."/>
            <person name="Arnold W."/>
            <person name="Bahr A."/>
            <person name="Ballesta J.P.G."/>
            <person name="Bargues M."/>
            <person name="Baron L."/>
            <person name="Becker A."/>
            <person name="Biteau N."/>
            <person name="Bloecker H."/>
            <person name="Blugeon C."/>
            <person name="Boskovic J."/>
            <person name="Brandt P."/>
            <person name="Brueckner M."/>
            <person name="Buitrago M.J."/>
            <person name="Coster F."/>
            <person name="Delaveau T."/>
            <person name="del Rey F."/>
            <person name="Dujon B."/>
            <person name="Eide L.G."/>
            <person name="Garcia-Cantalejo J.M."/>
            <person name="Goffeau A."/>
            <person name="Gomez-Peris A."/>
            <person name="Granotier C."/>
            <person name="Hanemann V."/>
            <person name="Hankeln T."/>
            <person name="Hoheisel J.D."/>
            <person name="Jaeger W."/>
            <person name="Jimenez A."/>
            <person name="Jonniaux J.-L."/>
            <person name="Kraemer C."/>
            <person name="Kuester H."/>
            <person name="Laamanen P."/>
            <person name="Legros Y."/>
            <person name="Louis E.J."/>
            <person name="Moeller-Rieker S."/>
            <person name="Monnet A."/>
            <person name="Moro M."/>
            <person name="Mueller-Auer S."/>
            <person name="Nussbaumer B."/>
            <person name="Paricio N."/>
            <person name="Paulin L."/>
            <person name="Perea J."/>
            <person name="Perez-Alonso M."/>
            <person name="Perez-Ortin J.E."/>
            <person name="Pohl T.M."/>
            <person name="Prydz H."/>
            <person name="Purnelle B."/>
            <person name="Rasmussen S.W."/>
            <person name="Remacha M.A."/>
            <person name="Revuelta J.L."/>
            <person name="Rieger M."/>
            <person name="Salom D."/>
            <person name="Saluz H.P."/>
            <person name="Saiz J.E."/>
            <person name="Saren A.-M."/>
            <person name="Schaefer M."/>
            <person name="Scharfe M."/>
            <person name="Schmidt E.R."/>
            <person name="Schneider C."/>
            <person name="Scholler P."/>
            <person name="Schwarz S."/>
            <person name="Soler-Mira A."/>
            <person name="Urrestarazu L.A."/>
            <person name="Verhasselt P."/>
            <person name="Vissers S."/>
            <person name="Voet M."/>
            <person name="Volckaert G."/>
            <person name="Wagner G."/>
            <person name="Wambutt R."/>
            <person name="Wedler E."/>
            <person name="Wedler H."/>
            <person name="Woelfl S."/>
            <person name="Harris D.E."/>
            <person name="Bowman S."/>
            <person name="Brown D."/>
            <person name="Churcher C.M."/>
            <person name="Connor R."/>
            <person name="Dedman K."/>
            <person name="Gentles S."/>
            <person name="Hamlin N."/>
            <person name="Hunt S."/>
            <person name="Jones L."/>
            <person name="McDonald S."/>
            <person name="Murphy L.D."/>
            <person name="Niblett D."/>
            <person name="Odell C."/>
            <person name="Oliver K."/>
            <person name="Rajandream M.A."/>
            <person name="Richards C."/>
            <person name="Shore L."/>
            <person name="Walsh S.V."/>
            <person name="Barrell B.G."/>
            <person name="Dietrich F.S."/>
            <person name="Mulligan J.T."/>
            <person name="Allen E."/>
            <person name="Araujo R."/>
            <person name="Aviles E."/>
            <person name="Berno A."/>
            <person name="Carpenter J."/>
            <person name="Chen E."/>
            <person name="Cherry J.M."/>
            <person name="Chung E."/>
            <person name="Duncan M."/>
            <person name="Hunicke-Smith S."/>
            <person name="Hyman R.W."/>
            <person name="Komp C."/>
            <person name="Lashkari D."/>
            <person name="Lew H."/>
            <person name="Lin D."/>
            <person name="Mosedale D."/>
            <person name="Nakahara K."/>
            <person name="Namath A."/>
            <person name="Oefner P."/>
            <person name="Oh C."/>
            <person name="Petel F.X."/>
            <person name="Roberts D."/>
            <person name="Schramm S."/>
            <person name="Schroeder M."/>
            <person name="Shogren T."/>
            <person name="Shroff N."/>
            <person name="Winant A."/>
            <person name="Yelton M.A."/>
            <person name="Botstein D."/>
            <person name="Davis R.W."/>
            <person name="Johnston M."/>
            <person name="Andrews S."/>
            <person name="Brinkman R."/>
            <person name="Cooper J."/>
            <person name="Ding H."/>
            <person name="Du Z."/>
            <person name="Favello A."/>
            <person name="Fulton L."/>
            <person name="Gattung S."/>
            <person name="Greco T."/>
            <person name="Hallsworth K."/>
            <person name="Hawkins J."/>
            <person name="Hillier L.W."/>
            <person name="Jier M."/>
            <person name="Johnson D."/>
            <person name="Johnston L."/>
            <person name="Kirsten J."/>
            <person name="Kucaba T."/>
            <person name="Langston Y."/>
            <person name="Latreille P."/>
            <person name="Le T."/>
            <person name="Mardis E."/>
            <person name="Menezes S."/>
            <person name="Miller N."/>
            <person name="Nhan M."/>
            <person name="Pauley A."/>
            <person name="Peluso D."/>
            <person name="Rifkin L."/>
            <person name="Riles L."/>
            <person name="Taich A."/>
            <person name="Trevaskis E."/>
            <person name="Vignati D."/>
            <person name="Wilcox L."/>
            <person name="Wohldman P."/>
            <person name="Vaudin M."/>
            <person name="Wilson R."/>
            <person name="Waterston R."/>
            <person name="Albermann K."/>
            <person name="Hani J."/>
            <person name="Heumann K."/>
            <person name="Kleine K."/>
            <person name="Mewes H.-W."/>
            <person name="Zollner A."/>
            <person name="Zaccaria P."/>
        </authorList>
    </citation>
    <scope>NUCLEOTIDE SEQUENCE [LARGE SCALE GENOMIC DNA]</scope>
    <source>
        <strain>ATCC 204508 / S288c</strain>
    </source>
</reference>
<reference key="3">
    <citation type="journal article" date="2014" name="G3 (Bethesda)">
        <title>The reference genome sequence of Saccharomyces cerevisiae: Then and now.</title>
        <authorList>
            <person name="Engel S.R."/>
            <person name="Dietrich F.S."/>
            <person name="Fisk D.G."/>
            <person name="Binkley G."/>
            <person name="Balakrishnan R."/>
            <person name="Costanzo M.C."/>
            <person name="Dwight S.S."/>
            <person name="Hitz B.C."/>
            <person name="Karra K."/>
            <person name="Nash R.S."/>
            <person name="Weng S."/>
            <person name="Wong E.D."/>
            <person name="Lloyd P."/>
            <person name="Skrzypek M.S."/>
            <person name="Miyasato S.R."/>
            <person name="Simison M."/>
            <person name="Cherry J.M."/>
        </authorList>
    </citation>
    <scope>GENOME REANNOTATION</scope>
    <source>
        <strain>ATCC 204508 / S288c</strain>
    </source>
</reference>
<reference key="4">
    <citation type="journal article" date="2007" name="Genome Res.">
        <title>Approaching a complete repository of sequence-verified protein-encoding clones for Saccharomyces cerevisiae.</title>
        <authorList>
            <person name="Hu Y."/>
            <person name="Rolfs A."/>
            <person name="Bhullar B."/>
            <person name="Murthy T.V.S."/>
            <person name="Zhu C."/>
            <person name="Berger M.F."/>
            <person name="Camargo A.A."/>
            <person name="Kelley F."/>
            <person name="McCarron S."/>
            <person name="Jepson D."/>
            <person name="Richardson A."/>
            <person name="Raphael J."/>
            <person name="Moreira D."/>
            <person name="Taycher E."/>
            <person name="Zuo D."/>
            <person name="Mohr S."/>
            <person name="Kane M.F."/>
            <person name="Williamson J."/>
            <person name="Simpson A.J.G."/>
            <person name="Bulyk M.L."/>
            <person name="Harlow E."/>
            <person name="Marsischky G."/>
            <person name="Kolodner R.D."/>
            <person name="LaBaer J."/>
        </authorList>
    </citation>
    <scope>NUCLEOTIDE SEQUENCE [GENOMIC DNA]</scope>
    <source>
        <strain>ATCC 204508 / S288c</strain>
    </source>
</reference>
<reference key="5">
    <citation type="journal article" date="1981" name="J. Biol. Chem.">
        <title>Crystallization of yeast triose phosphate isomerase from polyethylene glycol.</title>
        <authorList>
            <person name="Alber T."/>
            <person name="Hartman F.C."/>
            <person name="Johnson R.M."/>
            <person name="Petsko G.A."/>
            <person name="Tsernoglou D."/>
        </authorList>
    </citation>
    <scope>PROTEIN SEQUENCE OF 2-15</scope>
</reference>
<reference key="6">
    <citation type="journal article" date="1994" name="Electrophoresis">
        <title>Protein identifications for a Saccharomyces cerevisiae protein database.</title>
        <authorList>
            <person name="Garrels J.I."/>
            <person name="Futcher B."/>
            <person name="Kobayashi R."/>
            <person name="Latter G.I."/>
            <person name="Schwender B."/>
            <person name="Volpe T."/>
            <person name="Warner J.R."/>
            <person name="McLaughlin C.S."/>
        </authorList>
    </citation>
    <scope>PROTEIN SEQUENCE OF 56-84 AND 90-101</scope>
    <source>
        <strain>ATCC 204508 / S288c</strain>
    </source>
</reference>
<reference key="7">
    <citation type="journal article" date="2003" name="Nature">
        <title>Global analysis of protein expression in yeast.</title>
        <authorList>
            <person name="Ghaemmaghami S."/>
            <person name="Huh W.-K."/>
            <person name="Bower K."/>
            <person name="Howson R.W."/>
            <person name="Belle A."/>
            <person name="Dephoure N."/>
            <person name="O'Shea E.K."/>
            <person name="Weissman J.S."/>
        </authorList>
    </citation>
    <scope>LEVEL OF PROTEIN EXPRESSION [LARGE SCALE ANALYSIS]</scope>
</reference>
<reference key="8">
    <citation type="journal article" date="2007" name="J. Proteome Res.">
        <title>Large-scale phosphorylation analysis of alpha-factor-arrested Saccharomyces cerevisiae.</title>
        <authorList>
            <person name="Li X."/>
            <person name="Gerber S.A."/>
            <person name="Rudner A.D."/>
            <person name="Beausoleil S.A."/>
            <person name="Haas W."/>
            <person name="Villen J."/>
            <person name="Elias J.E."/>
            <person name="Gygi S.P."/>
        </authorList>
    </citation>
    <scope>IDENTIFICATION BY MASS SPECTROMETRY [LARGE SCALE ANALYSIS]</scope>
    <source>
        <strain>ADR376</strain>
    </source>
</reference>
<reference key="9">
    <citation type="journal article" date="2007" name="Proc. Natl. Acad. Sci. U.S.A.">
        <title>Analysis of phosphorylation sites on proteins from Saccharomyces cerevisiae by electron transfer dissociation (ETD) mass spectrometry.</title>
        <authorList>
            <person name="Chi A."/>
            <person name="Huttenhower C."/>
            <person name="Geer L.Y."/>
            <person name="Coon J.J."/>
            <person name="Syka J.E.P."/>
            <person name="Bai D.L."/>
            <person name="Shabanowitz J."/>
            <person name="Burke D.J."/>
            <person name="Troyanskaya O.G."/>
            <person name="Hunt D.F."/>
        </authorList>
    </citation>
    <scope>IDENTIFICATION BY MASS SPECTROMETRY [LARGE SCALE ANALYSIS]</scope>
</reference>
<reference key="10">
    <citation type="journal article" date="2008" name="Mol. Cell. Proteomics">
        <title>A multidimensional chromatography technology for in-depth phosphoproteome analysis.</title>
        <authorList>
            <person name="Albuquerque C.P."/>
            <person name="Smolka M.B."/>
            <person name="Payne S.H."/>
            <person name="Bafna V."/>
            <person name="Eng J."/>
            <person name="Zhou H."/>
        </authorList>
    </citation>
    <scope>PHOSPHORYLATION [LARGE SCALE ANALYSIS] AT SER-71 AND SER-215</scope>
    <scope>IDENTIFICATION BY MASS SPECTROMETRY [LARGE SCALE ANALYSIS]</scope>
</reference>
<reference key="11">
    <citation type="journal article" date="2009" name="Science">
        <title>Global analysis of Cdk1 substrate phosphorylation sites provides insights into evolution.</title>
        <authorList>
            <person name="Holt L.J."/>
            <person name="Tuch B.B."/>
            <person name="Villen J."/>
            <person name="Johnson A.D."/>
            <person name="Gygi S.P."/>
            <person name="Morgan D.O."/>
        </authorList>
    </citation>
    <scope>PHOSPHORYLATION [LARGE SCALE ANALYSIS] AT THR-4; SER-71 AND SER-215</scope>
    <scope>IDENTIFICATION BY MASS SPECTROMETRY [LARGE SCALE ANALYSIS]</scope>
</reference>
<reference key="12">
    <citation type="journal article" date="2012" name="Proteomics">
        <title>Sites of ubiquitin attachment in Saccharomyces cerevisiae.</title>
        <authorList>
            <person name="Starita L.M."/>
            <person name="Lo R.S."/>
            <person name="Eng J.K."/>
            <person name="von Haller P.D."/>
            <person name="Fields S."/>
        </authorList>
    </citation>
    <scope>UBIQUITINATION [LARGE SCALE ANALYSIS] AT LYS-223</scope>
    <scope>IDENTIFICATION BY MASS SPECTROMETRY [LARGE SCALE ANALYSIS]</scope>
</reference>
<reference key="13">
    <citation type="journal article" date="1990" name="Biochemistry">
        <title>Structure of yeast triosephosphate isomerase at 1.9-A resolution.</title>
        <authorList>
            <person name="Lolis E."/>
            <person name="Alber T.C."/>
            <person name="Davenport R.C."/>
            <person name="Rose D."/>
            <person name="Hartman F.C."/>
            <person name="Petsko G.A."/>
        </authorList>
    </citation>
    <scope>X-RAY CRYSTALLOGRAPHY (1.9 ANGSTROMS)</scope>
</reference>
<reference key="14">
    <citation type="journal article" date="1990" name="Biochemistry">
        <title>Crystallographic analysis of the complex between triosephosphate isomerase and 2-phosphoglycolate at 2.5-A resolution: implications for catalysis.</title>
        <authorList>
            <person name="Lolis E."/>
            <person name="Petsko G.A."/>
        </authorList>
    </citation>
    <scope>X-RAY CRYSTALLOGRAPHY (2.5 ANGSTROMS) OF COMPLEX WITH 2-P-GLYCOLATE</scope>
</reference>
<reference key="15">
    <citation type="journal article" date="1992" name="J. Mol. Biol.">
        <title>Comparison of the refined crystal structures of liganded and unliganded chicken, yeast and trypanosomal triosephosphate isomerase.</title>
        <authorList>
            <person name="Wierenga R.K."/>
            <person name="Noble M.E.M."/>
            <person name="Davenport R.C."/>
        </authorList>
    </citation>
    <scope>COMPARISON OF X-RAY STRUCTURES</scope>
</reference>
<reference key="16">
    <citation type="journal article" date="1987" name="Cold Spring Harb. Symp. Quant. Biol.">
        <title>Crystallography and site-directed mutagenesis of yeast triosephosphate isomerase: what can we learn about catalysis from a 'simple' enzyme?</title>
        <authorList>
            <person name="Alber T.C."/>
            <person name="Davenport R.C."/>
            <person name="Giammona D.A."/>
            <person name="Lolis E."/>
            <person name="Petsko G.A."/>
            <person name="Ringe D."/>
        </authorList>
    </citation>
    <scope>REVIEW</scope>
</reference>
<reference key="17">
    <citation type="journal article" date="2003" name="Proc. Natl. Acad. Sci. U.S.A.">
        <title>Optimal alignment for enzymatic proton transfer: structure of the Michaelis complex of triosephosphate isomerase at 1.2-A resolution.</title>
        <authorList>
            <person name="Jogl G."/>
            <person name="Rozovsky S."/>
            <person name="McDermott A.E."/>
            <person name="Tong L."/>
        </authorList>
    </citation>
    <scope>X-RAY CRYSTALLOGRAPHY (1.6 ANGSTROMS) IN COMPLEX WITH SUBSTRATE</scope>
    <scope>HOMODIMERIZATION</scope>
</reference>
<sequence length="248" mass="26795">MARTFFVGGNFKLNGSKQSIKEIVERLNTASIPENVEVVICPPATYLDYSVSLVKKPQVTVGAQNAYLKASGAFTGENSVDQIKDVGAKWVILGHSERRSYFHEDDKFIADKTKFALGQGVGVILCIGETLEEKKAGKTLDVVERQLNAVLEEVKDWTNVVVAYEPVWAIGTGLAATPEDAQDIHASIRKFLASKLGDKAASELRILYGGSANGSNAVTFKDKADVDGFLVGGASLKPEFVDIINSRN</sequence>
<gene>
    <name type="primary">TPI1</name>
    <name type="ordered locus">YDR050C</name>
    <name type="ORF">YD9609.05C</name>
</gene>
<comment type="catalytic activity">
    <reaction>
        <text>D-glyceraldehyde 3-phosphate = dihydroxyacetone phosphate</text>
        <dbReference type="Rhea" id="RHEA:18585"/>
        <dbReference type="ChEBI" id="CHEBI:57642"/>
        <dbReference type="ChEBI" id="CHEBI:59776"/>
        <dbReference type="EC" id="5.3.1.1"/>
    </reaction>
</comment>
<comment type="pathway">
    <text>Carbohydrate biosynthesis; gluconeogenesis.</text>
</comment>
<comment type="pathway">
    <text>Carbohydrate degradation; glycolysis; D-glyceraldehyde 3-phosphate from glycerone phosphate: step 1/1.</text>
</comment>
<comment type="subunit">
    <text evidence="1">Homodimer.</text>
</comment>
<comment type="miscellaneous">
    <text evidence="2">Present with 207000 molecules/cell in log phase SD medium.</text>
</comment>
<comment type="similarity">
    <text evidence="4">Belongs to the triosephosphate isomerase family.</text>
</comment>
<name>TPIS_YEAST</name>
<evidence type="ECO:0000269" key="1">
    <source>
    </source>
</evidence>
<evidence type="ECO:0000269" key="2">
    <source>
    </source>
</evidence>
<evidence type="ECO:0000269" key="3">
    <source>
    </source>
</evidence>
<evidence type="ECO:0000305" key="4"/>
<evidence type="ECO:0007744" key="5">
    <source>
    </source>
</evidence>
<evidence type="ECO:0007744" key="6">
    <source>
    </source>
</evidence>
<evidence type="ECO:0007744" key="7">
    <source>
    </source>
</evidence>
<evidence type="ECO:0007829" key="8">
    <source>
        <dbReference type="PDB" id="1NEY"/>
    </source>
</evidence>
<evidence type="ECO:0007829" key="9">
    <source>
        <dbReference type="PDB" id="4FF7"/>
    </source>
</evidence>
<protein>
    <recommendedName>
        <fullName>Triosephosphate isomerase</fullName>
        <shortName>TIM</shortName>
        <ecNumber>5.3.1.1</ecNumber>
    </recommendedName>
    <alternativeName>
        <fullName>Triose-phosphate isomerase</fullName>
    </alternativeName>
</protein>